<protein>
    <recommendedName>
        <fullName>Phosphatidylinositol N-acetylglucosaminyltransferase subunit P</fullName>
        <ecNumber>2.4.1.198</ecNumber>
    </recommendedName>
</protein>
<accession>O64792</accession>
<accession>A6QRD5</accession>
<name>PIGP_ARATH</name>
<dbReference type="EC" id="2.4.1.198"/>
<dbReference type="EMBL" id="AC004255">
    <property type="protein sequence ID" value="AAC13913.1"/>
    <property type="molecule type" value="Genomic_DNA"/>
</dbReference>
<dbReference type="EMBL" id="CP002684">
    <property type="protein sequence ID" value="AEE33816.1"/>
    <property type="molecule type" value="Genomic_DNA"/>
</dbReference>
<dbReference type="EMBL" id="CP002684">
    <property type="protein sequence ID" value="ANM58168.1"/>
    <property type="molecule type" value="Genomic_DNA"/>
</dbReference>
<dbReference type="EMBL" id="BT030658">
    <property type="protein sequence ID" value="ABR46238.1"/>
    <property type="molecule type" value="mRNA"/>
</dbReference>
<dbReference type="RefSeq" id="NP_001319281.1">
    <property type="nucleotide sequence ID" value="NM_001333947.1"/>
</dbReference>
<dbReference type="RefSeq" id="NP_176323.1">
    <property type="nucleotide sequence ID" value="NM_104809.2"/>
</dbReference>
<dbReference type="FunCoup" id="O64792">
    <property type="interactions" value="108"/>
</dbReference>
<dbReference type="STRING" id="3702.O64792"/>
<dbReference type="PaxDb" id="3702-AT1G61280.1"/>
<dbReference type="EnsemblPlants" id="AT1G61280.1">
    <property type="protein sequence ID" value="AT1G61280.1"/>
    <property type="gene ID" value="AT1G61280"/>
</dbReference>
<dbReference type="EnsemblPlants" id="AT1G61280.2">
    <property type="protein sequence ID" value="AT1G61280.2"/>
    <property type="gene ID" value="AT1G61280"/>
</dbReference>
<dbReference type="GeneID" id="842422"/>
<dbReference type="Gramene" id="AT1G61280.1">
    <property type="protein sequence ID" value="AT1G61280.1"/>
    <property type="gene ID" value="AT1G61280"/>
</dbReference>
<dbReference type="Gramene" id="AT1G61280.2">
    <property type="protein sequence ID" value="AT1G61280.2"/>
    <property type="gene ID" value="AT1G61280"/>
</dbReference>
<dbReference type="KEGG" id="ath:AT1G61280"/>
<dbReference type="Araport" id="AT1G61280"/>
<dbReference type="TAIR" id="AT1G61280"/>
<dbReference type="eggNOG" id="KOG2257">
    <property type="taxonomic scope" value="Eukaryota"/>
</dbReference>
<dbReference type="HOGENOM" id="CLU_081616_0_1_1"/>
<dbReference type="InParanoid" id="O64792"/>
<dbReference type="OMA" id="HRDWDPS"/>
<dbReference type="PhylomeDB" id="O64792"/>
<dbReference type="BioCyc" id="ARA:AT1G61280-MONOMER"/>
<dbReference type="UniPathway" id="UPA00196"/>
<dbReference type="PRO" id="PR:O64792"/>
<dbReference type="Proteomes" id="UP000006548">
    <property type="component" value="Chromosome 1"/>
</dbReference>
<dbReference type="ExpressionAtlas" id="O64792">
    <property type="expression patterns" value="baseline and differential"/>
</dbReference>
<dbReference type="GO" id="GO:0016020">
    <property type="term" value="C:membrane"/>
    <property type="evidence" value="ECO:0007669"/>
    <property type="project" value="UniProtKB-SubCell"/>
</dbReference>
<dbReference type="GO" id="GO:0017176">
    <property type="term" value="F:phosphatidylinositol N-acetylglucosaminyltransferase activity"/>
    <property type="evidence" value="ECO:0007669"/>
    <property type="project" value="UniProtKB-EC"/>
</dbReference>
<dbReference type="GO" id="GO:0006506">
    <property type="term" value="P:GPI anchor biosynthetic process"/>
    <property type="evidence" value="ECO:0007669"/>
    <property type="project" value="UniProtKB-UniPathway"/>
</dbReference>
<dbReference type="InterPro" id="IPR013717">
    <property type="entry name" value="PIG-P"/>
</dbReference>
<dbReference type="InterPro" id="IPR016542">
    <property type="entry name" value="PIG-P_GPI19"/>
</dbReference>
<dbReference type="PANTHER" id="PTHR47681">
    <property type="entry name" value="PHOSPHATIDYLINOSITOL N-ACETYLGLUCOSAMINYLTRANSFERASE SUBUNIT P-RELATED"/>
    <property type="match status" value="1"/>
</dbReference>
<dbReference type="PANTHER" id="PTHR47681:SF3">
    <property type="entry name" value="PHOSPHATIDYLINOSITOL N-ACETYLGLUCOSAMINYLTRANSFERASE SUBUNIT P-RELATED"/>
    <property type="match status" value="1"/>
</dbReference>
<dbReference type="Pfam" id="PF08510">
    <property type="entry name" value="PIG-P"/>
    <property type="match status" value="1"/>
</dbReference>
<dbReference type="PIRSF" id="PIRSF008765">
    <property type="entry name" value="PIG-P_GPI19"/>
    <property type="match status" value="1"/>
</dbReference>
<organism>
    <name type="scientific">Arabidopsis thaliana</name>
    <name type="common">Mouse-ear cress</name>
    <dbReference type="NCBI Taxonomy" id="3702"/>
    <lineage>
        <taxon>Eukaryota</taxon>
        <taxon>Viridiplantae</taxon>
        <taxon>Streptophyta</taxon>
        <taxon>Embryophyta</taxon>
        <taxon>Tracheophyta</taxon>
        <taxon>Spermatophyta</taxon>
        <taxon>Magnoliopsida</taxon>
        <taxon>eudicotyledons</taxon>
        <taxon>Gunneridae</taxon>
        <taxon>Pentapetalae</taxon>
        <taxon>rosids</taxon>
        <taxon>malvids</taxon>
        <taxon>Brassicales</taxon>
        <taxon>Brassicaceae</taxon>
        <taxon>Camelineae</taxon>
        <taxon>Arabidopsis</taxon>
    </lineage>
</organism>
<sequence>MLSLNQEVHGPKTSEVYGFVGSISIVVATVIFLIWGYVPDKFLESIGIYYYPSKYWAMAMPMYSMVTLLVALVFYIGLNFMSTSKPTSLNTLFDDYSREDVNFLPLMKNGEDRPIDPISDIDITRINDLMFDSHLAK</sequence>
<evidence type="ECO:0000250" key="1"/>
<evidence type="ECO:0000255" key="2"/>
<evidence type="ECO:0000305" key="3"/>
<proteinExistence type="evidence at transcript level"/>
<comment type="function">
    <text evidence="1">Part of the complex catalyzing the transfer of N-acetylglucosamine from UDP-N-acetylglucosamine to phosphatidylinositol, the first step of GPI biosynthesis.</text>
</comment>
<comment type="catalytic activity">
    <reaction>
        <text>a 1,2-diacyl-sn-glycero-3-phospho-(1D-myo-inositol) + UDP-N-acetyl-alpha-D-glucosamine = a 6-(N-acetyl-alpha-D-glucosaminyl)-1-(1,2-diacyl-sn-glycero-3-phospho)-1D-myo-inositol + UDP + H(+)</text>
        <dbReference type="Rhea" id="RHEA:14789"/>
        <dbReference type="ChEBI" id="CHEBI:15378"/>
        <dbReference type="ChEBI" id="CHEBI:57265"/>
        <dbReference type="ChEBI" id="CHEBI:57705"/>
        <dbReference type="ChEBI" id="CHEBI:57880"/>
        <dbReference type="ChEBI" id="CHEBI:58223"/>
        <dbReference type="EC" id="2.4.1.198"/>
    </reaction>
</comment>
<comment type="pathway">
    <text>Glycolipid biosynthesis; glycosylphosphatidylinositol-anchor biosynthesis.</text>
</comment>
<comment type="subcellular location">
    <subcellularLocation>
        <location evidence="3">Membrane</location>
        <topology evidence="3">Multi-pass membrane protein</topology>
    </subcellularLocation>
</comment>
<comment type="similarity">
    <text evidence="3">Belongs to the PIGP family.</text>
</comment>
<reference key="1">
    <citation type="journal article" date="2000" name="Nature">
        <title>Sequence and analysis of chromosome 1 of the plant Arabidopsis thaliana.</title>
        <authorList>
            <person name="Theologis A."/>
            <person name="Ecker J.R."/>
            <person name="Palm C.J."/>
            <person name="Federspiel N.A."/>
            <person name="Kaul S."/>
            <person name="White O."/>
            <person name="Alonso J."/>
            <person name="Altafi H."/>
            <person name="Araujo R."/>
            <person name="Bowman C.L."/>
            <person name="Brooks S.Y."/>
            <person name="Buehler E."/>
            <person name="Chan A."/>
            <person name="Chao Q."/>
            <person name="Chen H."/>
            <person name="Cheuk R.F."/>
            <person name="Chin C.W."/>
            <person name="Chung M.K."/>
            <person name="Conn L."/>
            <person name="Conway A.B."/>
            <person name="Conway A.R."/>
            <person name="Creasy T.H."/>
            <person name="Dewar K."/>
            <person name="Dunn P."/>
            <person name="Etgu P."/>
            <person name="Feldblyum T.V."/>
            <person name="Feng J.-D."/>
            <person name="Fong B."/>
            <person name="Fujii C.Y."/>
            <person name="Gill J.E."/>
            <person name="Goldsmith A.D."/>
            <person name="Haas B."/>
            <person name="Hansen N.F."/>
            <person name="Hughes B."/>
            <person name="Huizar L."/>
            <person name="Hunter J.L."/>
            <person name="Jenkins J."/>
            <person name="Johnson-Hopson C."/>
            <person name="Khan S."/>
            <person name="Khaykin E."/>
            <person name="Kim C.J."/>
            <person name="Koo H.L."/>
            <person name="Kremenetskaia I."/>
            <person name="Kurtz D.B."/>
            <person name="Kwan A."/>
            <person name="Lam B."/>
            <person name="Langin-Hooper S."/>
            <person name="Lee A."/>
            <person name="Lee J.M."/>
            <person name="Lenz C.A."/>
            <person name="Li J.H."/>
            <person name="Li Y.-P."/>
            <person name="Lin X."/>
            <person name="Liu S.X."/>
            <person name="Liu Z.A."/>
            <person name="Luros J.S."/>
            <person name="Maiti R."/>
            <person name="Marziali A."/>
            <person name="Militscher J."/>
            <person name="Miranda M."/>
            <person name="Nguyen M."/>
            <person name="Nierman W.C."/>
            <person name="Osborne B.I."/>
            <person name="Pai G."/>
            <person name="Peterson J."/>
            <person name="Pham P.K."/>
            <person name="Rizzo M."/>
            <person name="Rooney T."/>
            <person name="Rowley D."/>
            <person name="Sakano H."/>
            <person name="Salzberg S.L."/>
            <person name="Schwartz J.R."/>
            <person name="Shinn P."/>
            <person name="Southwick A.M."/>
            <person name="Sun H."/>
            <person name="Tallon L.J."/>
            <person name="Tambunga G."/>
            <person name="Toriumi M.J."/>
            <person name="Town C.D."/>
            <person name="Utterback T."/>
            <person name="Van Aken S."/>
            <person name="Vaysberg M."/>
            <person name="Vysotskaia V.S."/>
            <person name="Walker M."/>
            <person name="Wu D."/>
            <person name="Yu G."/>
            <person name="Fraser C.M."/>
            <person name="Venter J.C."/>
            <person name="Davis R.W."/>
        </authorList>
    </citation>
    <scope>NUCLEOTIDE SEQUENCE [LARGE SCALE GENOMIC DNA]</scope>
    <source>
        <strain>cv. Columbia</strain>
    </source>
</reference>
<reference key="2">
    <citation type="journal article" date="2017" name="Plant J.">
        <title>Araport11: a complete reannotation of the Arabidopsis thaliana reference genome.</title>
        <authorList>
            <person name="Cheng C.Y."/>
            <person name="Krishnakumar V."/>
            <person name="Chan A.P."/>
            <person name="Thibaud-Nissen F."/>
            <person name="Schobel S."/>
            <person name="Town C.D."/>
        </authorList>
    </citation>
    <scope>GENOME REANNOTATION</scope>
    <source>
        <strain>cv. Columbia</strain>
    </source>
</reference>
<reference key="3">
    <citation type="submission" date="2007-06" db="EMBL/GenBank/DDBJ databases">
        <title>Arabidopsis ORF clones.</title>
        <authorList>
            <person name="Bautista-Mercan V.R."/>
            <person name="Kim C.J."/>
            <person name="Chen H."/>
            <person name="Quan R."/>
            <person name="De Los Reyes C."/>
            <person name="Ecker J.R."/>
        </authorList>
    </citation>
    <scope>NUCLEOTIDE SEQUENCE [LARGE SCALE MRNA]</scope>
    <source>
        <strain>cv. Columbia</strain>
    </source>
</reference>
<feature type="chain" id="PRO_0000191786" description="Phosphatidylinositol N-acetylglucosaminyltransferase subunit P">
    <location>
        <begin position="1"/>
        <end position="137"/>
    </location>
</feature>
<feature type="transmembrane region" description="Helical" evidence="2">
    <location>
        <begin position="16"/>
        <end position="36"/>
    </location>
</feature>
<feature type="transmembrane region" description="Helical" evidence="2">
    <location>
        <begin position="58"/>
        <end position="78"/>
    </location>
</feature>
<gene>
    <name type="ordered locus">At1g61280</name>
    <name type="ORF">T1F9.23</name>
</gene>
<keyword id="KW-0328">Glycosyltransferase</keyword>
<keyword id="KW-0337">GPI-anchor biosynthesis</keyword>
<keyword id="KW-0472">Membrane</keyword>
<keyword id="KW-1185">Reference proteome</keyword>
<keyword id="KW-0808">Transferase</keyword>
<keyword id="KW-0812">Transmembrane</keyword>
<keyword id="KW-1133">Transmembrane helix</keyword>